<proteinExistence type="inferred from homology"/>
<reference key="1">
    <citation type="submission" date="2007-04" db="EMBL/GenBank/DDBJ databases">
        <title>Complete sequence of Shewanella putrefaciens CN-32.</title>
        <authorList>
            <consortium name="US DOE Joint Genome Institute"/>
            <person name="Copeland A."/>
            <person name="Lucas S."/>
            <person name="Lapidus A."/>
            <person name="Barry K."/>
            <person name="Detter J.C."/>
            <person name="Glavina del Rio T."/>
            <person name="Hammon N."/>
            <person name="Israni S."/>
            <person name="Dalin E."/>
            <person name="Tice H."/>
            <person name="Pitluck S."/>
            <person name="Chain P."/>
            <person name="Malfatti S."/>
            <person name="Shin M."/>
            <person name="Vergez L."/>
            <person name="Schmutz J."/>
            <person name="Larimer F."/>
            <person name="Land M."/>
            <person name="Hauser L."/>
            <person name="Kyrpides N."/>
            <person name="Mikhailova N."/>
            <person name="Romine M.F."/>
            <person name="Fredrickson J."/>
            <person name="Tiedje J."/>
            <person name="Richardson P."/>
        </authorList>
    </citation>
    <scope>NUCLEOTIDE SEQUENCE [LARGE SCALE GENOMIC DNA]</scope>
    <source>
        <strain>CN-32 / ATCC BAA-453</strain>
    </source>
</reference>
<accession>A4Y384</accession>
<organism>
    <name type="scientific">Shewanella putrefaciens (strain CN-32 / ATCC BAA-453)</name>
    <dbReference type="NCBI Taxonomy" id="319224"/>
    <lineage>
        <taxon>Bacteria</taxon>
        <taxon>Pseudomonadati</taxon>
        <taxon>Pseudomonadota</taxon>
        <taxon>Gammaproteobacteria</taxon>
        <taxon>Alteromonadales</taxon>
        <taxon>Shewanellaceae</taxon>
        <taxon>Shewanella</taxon>
    </lineage>
</organism>
<gene>
    <name type="ordered locus">Sputcn32_0687</name>
</gene>
<protein>
    <recommendedName>
        <fullName evidence="1">UPF0251 protein Sputcn32_0687</fullName>
    </recommendedName>
</protein>
<sequence length="98" mass="10643">MARPKKCRQLSSCVPCSLFKPNGIPSVELTHIQLAADEFEALELGDVQRLSQLDAAALMGISRQTFGYLLASARKKVATAITQGQVLRLPSKTDKDLS</sequence>
<name>Y687_SHEPC</name>
<feature type="chain" id="PRO_1000044755" description="UPF0251 protein Sputcn32_0687">
    <location>
        <begin position="1"/>
        <end position="98"/>
    </location>
</feature>
<dbReference type="EMBL" id="CP000681">
    <property type="protein sequence ID" value="ABP74417.1"/>
    <property type="molecule type" value="Genomic_DNA"/>
</dbReference>
<dbReference type="SMR" id="A4Y384"/>
<dbReference type="STRING" id="319224.Sputcn32_0687"/>
<dbReference type="KEGG" id="spc:Sputcn32_0687"/>
<dbReference type="eggNOG" id="COG1342">
    <property type="taxonomic scope" value="Bacteria"/>
</dbReference>
<dbReference type="HOGENOM" id="CLU_094511_2_1_6"/>
<dbReference type="Gene3D" id="1.10.10.10">
    <property type="entry name" value="Winged helix-like DNA-binding domain superfamily/Winged helix DNA-binding domain"/>
    <property type="match status" value="1"/>
</dbReference>
<dbReference type="HAMAP" id="MF_00674">
    <property type="entry name" value="UPF0251"/>
    <property type="match status" value="1"/>
</dbReference>
<dbReference type="InterPro" id="IPR002852">
    <property type="entry name" value="UPF0251"/>
</dbReference>
<dbReference type="InterPro" id="IPR036388">
    <property type="entry name" value="WH-like_DNA-bd_sf"/>
</dbReference>
<dbReference type="PANTHER" id="PTHR37478">
    <property type="match status" value="1"/>
</dbReference>
<dbReference type="PANTHER" id="PTHR37478:SF2">
    <property type="entry name" value="UPF0251 PROTEIN TK0562"/>
    <property type="match status" value="1"/>
</dbReference>
<dbReference type="Pfam" id="PF02001">
    <property type="entry name" value="DUF134"/>
    <property type="match status" value="1"/>
</dbReference>
<evidence type="ECO:0000255" key="1">
    <source>
        <dbReference type="HAMAP-Rule" id="MF_00674"/>
    </source>
</evidence>
<comment type="similarity">
    <text evidence="1">Belongs to the UPF0251 family.</text>
</comment>